<reference key="1">
    <citation type="submission" date="2007-02" db="EMBL/GenBank/DDBJ databases">
        <title>Complete sequence of chromosome 1 of Rhodobacter sphaeroides ATCC 17029.</title>
        <authorList>
            <person name="Copeland A."/>
            <person name="Lucas S."/>
            <person name="Lapidus A."/>
            <person name="Barry K."/>
            <person name="Detter J.C."/>
            <person name="Glavina del Rio T."/>
            <person name="Hammon N."/>
            <person name="Israni S."/>
            <person name="Dalin E."/>
            <person name="Tice H."/>
            <person name="Pitluck S."/>
            <person name="Kiss H."/>
            <person name="Brettin T."/>
            <person name="Bruce D."/>
            <person name="Han C."/>
            <person name="Tapia R."/>
            <person name="Gilna P."/>
            <person name="Schmutz J."/>
            <person name="Larimer F."/>
            <person name="Land M."/>
            <person name="Hauser L."/>
            <person name="Kyrpides N."/>
            <person name="Mikhailova N."/>
            <person name="Richardson P."/>
            <person name="Mackenzie C."/>
            <person name="Choudhary M."/>
            <person name="Donohue T.J."/>
            <person name="Kaplan S."/>
        </authorList>
    </citation>
    <scope>NUCLEOTIDE SEQUENCE [LARGE SCALE GENOMIC DNA]</scope>
    <source>
        <strain>ATCC 17029 / ATH 2.4.9</strain>
    </source>
</reference>
<proteinExistence type="inferred from homology"/>
<comment type="catalytic activity">
    <reaction evidence="1">
        <text>beta-D-fructose 1,6-bisphosphate + H2O = beta-D-fructose 6-phosphate + phosphate</text>
        <dbReference type="Rhea" id="RHEA:11064"/>
        <dbReference type="ChEBI" id="CHEBI:15377"/>
        <dbReference type="ChEBI" id="CHEBI:32966"/>
        <dbReference type="ChEBI" id="CHEBI:43474"/>
        <dbReference type="ChEBI" id="CHEBI:57634"/>
        <dbReference type="EC" id="3.1.3.11"/>
    </reaction>
</comment>
<comment type="cofactor">
    <cofactor evidence="1">
        <name>Mg(2+)</name>
        <dbReference type="ChEBI" id="CHEBI:18420"/>
    </cofactor>
    <text evidence="1">Binds 2 magnesium ions per subunit.</text>
</comment>
<comment type="pathway">
    <text evidence="1">Carbohydrate biosynthesis; Calvin cycle.</text>
</comment>
<comment type="subunit">
    <text evidence="1">Homotetramer.</text>
</comment>
<comment type="subcellular location">
    <subcellularLocation>
        <location evidence="1">Cytoplasm</location>
    </subcellularLocation>
</comment>
<comment type="similarity">
    <text evidence="1">Belongs to the FBPase class 1 family.</text>
</comment>
<keyword id="KW-0113">Calvin cycle</keyword>
<keyword id="KW-0119">Carbohydrate metabolism</keyword>
<keyword id="KW-0963">Cytoplasm</keyword>
<keyword id="KW-0378">Hydrolase</keyword>
<keyword id="KW-0460">Magnesium</keyword>
<keyword id="KW-0479">Metal-binding</keyword>
<dbReference type="EC" id="3.1.3.11" evidence="1"/>
<dbReference type="EMBL" id="CP000577">
    <property type="protein sequence ID" value="ABN78046.1"/>
    <property type="molecule type" value="Genomic_DNA"/>
</dbReference>
<dbReference type="SMR" id="A3PNY0"/>
<dbReference type="KEGG" id="rsh:Rsph17029_2944"/>
<dbReference type="HOGENOM" id="CLU_039977_0_0_5"/>
<dbReference type="UniPathway" id="UPA00116"/>
<dbReference type="GO" id="GO:0005829">
    <property type="term" value="C:cytosol"/>
    <property type="evidence" value="ECO:0007669"/>
    <property type="project" value="TreeGrafter"/>
</dbReference>
<dbReference type="GO" id="GO:0042132">
    <property type="term" value="F:fructose 1,6-bisphosphate 1-phosphatase activity"/>
    <property type="evidence" value="ECO:0007669"/>
    <property type="project" value="UniProtKB-UniRule"/>
</dbReference>
<dbReference type="GO" id="GO:0000287">
    <property type="term" value="F:magnesium ion binding"/>
    <property type="evidence" value="ECO:0007669"/>
    <property type="project" value="UniProtKB-UniRule"/>
</dbReference>
<dbReference type="GO" id="GO:0030388">
    <property type="term" value="P:fructose 1,6-bisphosphate metabolic process"/>
    <property type="evidence" value="ECO:0007669"/>
    <property type="project" value="TreeGrafter"/>
</dbReference>
<dbReference type="GO" id="GO:0006002">
    <property type="term" value="P:fructose 6-phosphate metabolic process"/>
    <property type="evidence" value="ECO:0007669"/>
    <property type="project" value="TreeGrafter"/>
</dbReference>
<dbReference type="GO" id="GO:0006000">
    <property type="term" value="P:fructose metabolic process"/>
    <property type="evidence" value="ECO:0007669"/>
    <property type="project" value="TreeGrafter"/>
</dbReference>
<dbReference type="GO" id="GO:0006094">
    <property type="term" value="P:gluconeogenesis"/>
    <property type="evidence" value="ECO:0007669"/>
    <property type="project" value="UniProtKB-UniRule"/>
</dbReference>
<dbReference type="GO" id="GO:0019253">
    <property type="term" value="P:reductive pentose-phosphate cycle"/>
    <property type="evidence" value="ECO:0007669"/>
    <property type="project" value="UniProtKB-UniPathway"/>
</dbReference>
<dbReference type="GO" id="GO:0005986">
    <property type="term" value="P:sucrose biosynthetic process"/>
    <property type="evidence" value="ECO:0007669"/>
    <property type="project" value="TreeGrafter"/>
</dbReference>
<dbReference type="CDD" id="cd00354">
    <property type="entry name" value="FBPase"/>
    <property type="match status" value="1"/>
</dbReference>
<dbReference type="FunFam" id="3.40.190.80:FF:000011">
    <property type="entry name" value="Fructose-1,6-bisphosphatase class 1"/>
    <property type="match status" value="1"/>
</dbReference>
<dbReference type="Gene3D" id="3.40.190.80">
    <property type="match status" value="1"/>
</dbReference>
<dbReference type="Gene3D" id="3.30.540.10">
    <property type="entry name" value="Fructose-1,6-Bisphosphatase, subunit A, domain 1"/>
    <property type="match status" value="1"/>
</dbReference>
<dbReference type="HAMAP" id="MF_01855">
    <property type="entry name" value="FBPase_class1"/>
    <property type="match status" value="1"/>
</dbReference>
<dbReference type="InterPro" id="IPR044015">
    <property type="entry name" value="FBPase_C_dom"/>
</dbReference>
<dbReference type="InterPro" id="IPR000146">
    <property type="entry name" value="FBPase_class-1"/>
</dbReference>
<dbReference type="InterPro" id="IPR033391">
    <property type="entry name" value="FBPase_N"/>
</dbReference>
<dbReference type="InterPro" id="IPR028343">
    <property type="entry name" value="FBPtase"/>
</dbReference>
<dbReference type="InterPro" id="IPR020548">
    <property type="entry name" value="Fructose_bisphosphatase_AS"/>
</dbReference>
<dbReference type="NCBIfam" id="NF006780">
    <property type="entry name" value="PRK09293.1-4"/>
    <property type="match status" value="1"/>
</dbReference>
<dbReference type="PANTHER" id="PTHR11556">
    <property type="entry name" value="FRUCTOSE-1,6-BISPHOSPHATASE-RELATED"/>
    <property type="match status" value="1"/>
</dbReference>
<dbReference type="PANTHER" id="PTHR11556:SF35">
    <property type="entry name" value="SEDOHEPTULOSE-1,7-BISPHOSPHATASE, CHLOROPLASTIC"/>
    <property type="match status" value="1"/>
</dbReference>
<dbReference type="Pfam" id="PF00316">
    <property type="entry name" value="FBPase"/>
    <property type="match status" value="1"/>
</dbReference>
<dbReference type="Pfam" id="PF18913">
    <property type="entry name" value="FBPase_C"/>
    <property type="match status" value="1"/>
</dbReference>
<dbReference type="PIRSF" id="PIRSF500210">
    <property type="entry name" value="FBPtase"/>
    <property type="match status" value="1"/>
</dbReference>
<dbReference type="PIRSF" id="PIRSF000904">
    <property type="entry name" value="FBPtase_SBPase"/>
    <property type="match status" value="1"/>
</dbReference>
<dbReference type="PRINTS" id="PR00115">
    <property type="entry name" value="F16BPHPHTASE"/>
</dbReference>
<dbReference type="SUPFAM" id="SSF56655">
    <property type="entry name" value="Carbohydrate phosphatase"/>
    <property type="match status" value="1"/>
</dbReference>
<dbReference type="PROSITE" id="PS00124">
    <property type="entry name" value="FBPASE"/>
    <property type="match status" value="1"/>
</dbReference>
<feature type="chain" id="PRO_0000364670" description="Fructose-1,6-bisphosphatase class 1 1">
    <location>
        <begin position="1"/>
        <end position="333"/>
    </location>
</feature>
<feature type="binding site" evidence="1">
    <location>
        <position position="81"/>
    </location>
    <ligand>
        <name>Mg(2+)</name>
        <dbReference type="ChEBI" id="CHEBI:18420"/>
        <label>1</label>
    </ligand>
</feature>
<feature type="binding site" evidence="1">
    <location>
        <position position="100"/>
    </location>
    <ligand>
        <name>Mg(2+)</name>
        <dbReference type="ChEBI" id="CHEBI:18420"/>
        <label>1</label>
    </ligand>
</feature>
<feature type="binding site" evidence="1">
    <location>
        <position position="100"/>
    </location>
    <ligand>
        <name>Mg(2+)</name>
        <dbReference type="ChEBI" id="CHEBI:18420"/>
        <label>2</label>
    </ligand>
</feature>
<feature type="binding site" evidence="1">
    <location>
        <position position="102"/>
    </location>
    <ligand>
        <name>Mg(2+)</name>
        <dbReference type="ChEBI" id="CHEBI:18420"/>
        <label>1</label>
    </ligand>
</feature>
<feature type="binding site" evidence="1">
    <location>
        <begin position="103"/>
        <end position="106"/>
    </location>
    <ligand>
        <name>substrate</name>
    </ligand>
</feature>
<feature type="binding site" evidence="1">
    <location>
        <position position="103"/>
    </location>
    <ligand>
        <name>Mg(2+)</name>
        <dbReference type="ChEBI" id="CHEBI:18420"/>
        <label>2</label>
    </ligand>
</feature>
<feature type="binding site" evidence="1">
    <location>
        <position position="191"/>
    </location>
    <ligand>
        <name>substrate</name>
    </ligand>
</feature>
<feature type="binding site" evidence="1">
    <location>
        <position position="263"/>
    </location>
    <ligand>
        <name>Mg(2+)</name>
        <dbReference type="ChEBI" id="CHEBI:18420"/>
        <label>2</label>
    </ligand>
</feature>
<gene>
    <name evidence="1" type="primary">fbp1</name>
    <name type="ordered locus">Rsph17029_2944</name>
</gene>
<evidence type="ECO:0000255" key="1">
    <source>
        <dbReference type="HAMAP-Rule" id="MF_01855"/>
    </source>
</evidence>
<protein>
    <recommendedName>
        <fullName evidence="1">Fructose-1,6-bisphosphatase class 1 1</fullName>
        <shortName evidence="1">FBPase class 1 1</shortName>
        <ecNumber evidence="1">3.1.3.11</ecNumber>
    </recommendedName>
    <alternativeName>
        <fullName evidence="1">D-fructose-1,6-bisphosphate 1-phosphohydrolase class 1 1</fullName>
    </alternativeName>
</protein>
<sequence length="333" mass="35891">MKPFPTHPDAIPAELQDVMDRLGTVAIEVANRIARGGIDEDLAGLCGTNTDGDGQKALDVIADDAFRAALEGSAVRFYASEEQDTAVTLNEAGTLALAIDPLDGSSNIDTNLSVGTIFAIWPAAATAEASFLRQGSELIAAGYVIYGPQVCMMVSFGKGTQKYVLDPGSRSFVLVDRAVKVPPSSTEFAINASNYRHWPKPIRAYIDDCVAGTEGPRGRNFNMRWLASLVAETHRILARGGVFLYPRDSRKGYEQGRLRYLYECAPIAFVITQAGGGATDGENPILGQTPSRLHARTPFVFGSAEKVARITAYHDLPEQETSALFGNRGLFRS</sequence>
<name>F16A1_CERS1</name>
<organism>
    <name type="scientific">Cereibacter sphaeroides (strain ATCC 17029 / ATH 2.4.9)</name>
    <name type="common">Rhodobacter sphaeroides</name>
    <dbReference type="NCBI Taxonomy" id="349101"/>
    <lineage>
        <taxon>Bacteria</taxon>
        <taxon>Pseudomonadati</taxon>
        <taxon>Pseudomonadota</taxon>
        <taxon>Alphaproteobacteria</taxon>
        <taxon>Rhodobacterales</taxon>
        <taxon>Paracoccaceae</taxon>
        <taxon>Cereibacter</taxon>
    </lineage>
</organism>
<accession>A3PNY0</accession>